<proteinExistence type="inferred from homology"/>
<dbReference type="EMBL" id="CP000255">
    <property type="protein sequence ID" value="ABD20574.1"/>
    <property type="molecule type" value="Genomic_DNA"/>
</dbReference>
<dbReference type="SMR" id="Q2FIM8"/>
<dbReference type="KEGG" id="saa:SAUSA300_0748"/>
<dbReference type="HOGENOM" id="CLU_059558_0_0_9"/>
<dbReference type="OMA" id="GFKHGVP"/>
<dbReference type="Proteomes" id="UP000001939">
    <property type="component" value="Chromosome"/>
</dbReference>
<dbReference type="GO" id="GO:0005524">
    <property type="term" value="F:ATP binding"/>
    <property type="evidence" value="ECO:0007669"/>
    <property type="project" value="UniProtKB-UniRule"/>
</dbReference>
<dbReference type="GO" id="GO:0005525">
    <property type="term" value="F:GTP binding"/>
    <property type="evidence" value="ECO:0007669"/>
    <property type="project" value="UniProtKB-UniRule"/>
</dbReference>
<dbReference type="Gene3D" id="3.40.50.300">
    <property type="entry name" value="P-loop containing nucleotide triphosphate hydrolases"/>
    <property type="match status" value="1"/>
</dbReference>
<dbReference type="HAMAP" id="MF_00636">
    <property type="entry name" value="RapZ_like"/>
    <property type="match status" value="1"/>
</dbReference>
<dbReference type="InterPro" id="IPR027417">
    <property type="entry name" value="P-loop_NTPase"/>
</dbReference>
<dbReference type="InterPro" id="IPR005337">
    <property type="entry name" value="RapZ-like"/>
</dbReference>
<dbReference type="InterPro" id="IPR053930">
    <property type="entry name" value="RapZ-like_N"/>
</dbReference>
<dbReference type="InterPro" id="IPR053931">
    <property type="entry name" value="RapZ_C"/>
</dbReference>
<dbReference type="NCBIfam" id="NF003828">
    <property type="entry name" value="PRK05416.1"/>
    <property type="match status" value="1"/>
</dbReference>
<dbReference type="PANTHER" id="PTHR30448">
    <property type="entry name" value="RNASE ADAPTER PROTEIN RAPZ"/>
    <property type="match status" value="1"/>
</dbReference>
<dbReference type="PANTHER" id="PTHR30448:SF0">
    <property type="entry name" value="RNASE ADAPTER PROTEIN RAPZ"/>
    <property type="match status" value="1"/>
</dbReference>
<dbReference type="Pfam" id="PF22740">
    <property type="entry name" value="PapZ_C"/>
    <property type="match status" value="1"/>
</dbReference>
<dbReference type="Pfam" id="PF03668">
    <property type="entry name" value="RapZ-like_N"/>
    <property type="match status" value="1"/>
</dbReference>
<dbReference type="PIRSF" id="PIRSF005052">
    <property type="entry name" value="P-loopkin"/>
    <property type="match status" value="1"/>
</dbReference>
<dbReference type="SUPFAM" id="SSF52540">
    <property type="entry name" value="P-loop containing nucleoside triphosphate hydrolases"/>
    <property type="match status" value="1"/>
</dbReference>
<feature type="chain" id="PRO_0000259004" description="Nucleotide-binding protein SAUSA300_0748">
    <location>
        <begin position="1"/>
        <end position="303"/>
    </location>
</feature>
<feature type="binding site" evidence="1">
    <location>
        <begin position="18"/>
        <end position="25"/>
    </location>
    <ligand>
        <name>ATP</name>
        <dbReference type="ChEBI" id="CHEBI:30616"/>
    </ligand>
</feature>
<feature type="binding site" evidence="1">
    <location>
        <begin position="69"/>
        <end position="72"/>
    </location>
    <ligand>
        <name>GTP</name>
        <dbReference type="ChEBI" id="CHEBI:37565"/>
    </ligand>
</feature>
<sequence length="303" mass="34812">MDNNEKEKSKSELLVVTGLSGAGKSLVIQCLEDMGYFCVDNLPPVLLPKFVELMEQGNPSLRKVAIAIDLRGKELFNSLVAVVDKVKSESDVIIDVMFLEASTEKLISRYKETRRAHPLMEQGKRSLINAINDEREHLSQIRSIANFVIDTTKLSPKELKERIRRYYEDEEFETFTINVTSFGFKHGIQMDADLVFDVRFLPNPYYVVDLRPLTGLDKDVYNYVMKWKETEIFFEKLTDLLDFMIPGYKKEGKSQLVIAIGCTGGQHRSVALAERLGNYLNEVFEYNVYVHHRDAHIESGEKK</sequence>
<reference key="1">
    <citation type="journal article" date="2006" name="Lancet">
        <title>Complete genome sequence of USA300, an epidemic clone of community-acquired meticillin-resistant Staphylococcus aureus.</title>
        <authorList>
            <person name="Diep B.A."/>
            <person name="Gill S.R."/>
            <person name="Chang R.F."/>
            <person name="Phan T.H."/>
            <person name="Chen J.H."/>
            <person name="Davidson M.G."/>
            <person name="Lin F."/>
            <person name="Lin J."/>
            <person name="Carleton H.A."/>
            <person name="Mongodin E.F."/>
            <person name="Sensabaugh G.F."/>
            <person name="Perdreau-Remington F."/>
        </authorList>
    </citation>
    <scope>NUCLEOTIDE SEQUENCE [LARGE SCALE GENOMIC DNA]</scope>
    <source>
        <strain>USA300</strain>
    </source>
</reference>
<comment type="function">
    <text evidence="1">Displays ATPase and GTPase activities.</text>
</comment>
<comment type="similarity">
    <text evidence="1">Belongs to the RapZ-like family.</text>
</comment>
<evidence type="ECO:0000255" key="1">
    <source>
        <dbReference type="HAMAP-Rule" id="MF_00636"/>
    </source>
</evidence>
<accession>Q2FIM8</accession>
<gene>
    <name type="ordered locus">SAUSA300_0748</name>
</gene>
<organism>
    <name type="scientific">Staphylococcus aureus (strain USA300)</name>
    <dbReference type="NCBI Taxonomy" id="367830"/>
    <lineage>
        <taxon>Bacteria</taxon>
        <taxon>Bacillati</taxon>
        <taxon>Bacillota</taxon>
        <taxon>Bacilli</taxon>
        <taxon>Bacillales</taxon>
        <taxon>Staphylococcaceae</taxon>
        <taxon>Staphylococcus</taxon>
    </lineage>
</organism>
<protein>
    <recommendedName>
        <fullName evidence="1">Nucleotide-binding protein SAUSA300_0748</fullName>
    </recommendedName>
</protein>
<name>Y748_STAA3</name>
<keyword id="KW-0067">ATP-binding</keyword>
<keyword id="KW-0342">GTP-binding</keyword>
<keyword id="KW-0547">Nucleotide-binding</keyword>